<organism evidence="3">
    <name type="scientific">Melicytus latifolius</name>
    <name type="common">Norfolk Island mahoe</name>
    <name type="synonym">Hymenanthera latifolia</name>
    <dbReference type="NCBI Taxonomy" id="212268"/>
    <lineage>
        <taxon>Eukaryota</taxon>
        <taxon>Viridiplantae</taxon>
        <taxon>Streptophyta</taxon>
        <taxon>Embryophyta</taxon>
        <taxon>Tracheophyta</taxon>
        <taxon>Spermatophyta</taxon>
        <taxon>Magnoliopsida</taxon>
        <taxon>eudicotyledons</taxon>
        <taxon>Gunneridae</taxon>
        <taxon>Pentapetalae</taxon>
        <taxon>rosids</taxon>
        <taxon>fabids</taxon>
        <taxon>Malpighiales</taxon>
        <taxon>Violaceae</taxon>
        <taxon>Melicytus</taxon>
    </lineage>
</organism>
<feature type="peptide" id="PRO_0000437507" description="Cyclotide mela-1" evidence="1 2">
    <location>
        <begin position="1"/>
        <end position="29"/>
    </location>
</feature>
<feature type="disulfide bond" evidence="1">
    <location>
        <begin position="5"/>
        <end position="19"/>
    </location>
</feature>
<feature type="disulfide bond" evidence="1">
    <location>
        <begin position="9"/>
        <end position="21"/>
    </location>
</feature>
<feature type="disulfide bond" evidence="1">
    <location>
        <begin position="14"/>
        <end position="26"/>
    </location>
</feature>
<feature type="cross-link" description="Cyclopeptide (Gly-Asp)" evidence="5">
    <location>
        <begin position="1"/>
        <end position="29"/>
    </location>
</feature>
<evidence type="ECO:0000255" key="1">
    <source>
        <dbReference type="PROSITE-ProRule" id="PRU00395"/>
    </source>
</evidence>
<evidence type="ECO:0000269" key="2">
    <source>
    </source>
</evidence>
<evidence type="ECO:0000303" key="3">
    <source>
    </source>
</evidence>
<evidence type="ECO:0000305" key="4"/>
<evidence type="ECO:0000305" key="5">
    <source>
    </source>
</evidence>
<name>CYML1_MELLF</name>
<reference evidence="4" key="1">
    <citation type="journal article" date="2015" name="ACS Chem. Biol.">
        <title>Lysine-rich cyclotides: a new subclass of circular knotted proteins from Violaceae.</title>
        <authorList>
            <person name="Ravipati A.S."/>
            <person name="Henriques S.T."/>
            <person name="Poth A.G."/>
            <person name="Kaas Q."/>
            <person name="Wang C.K."/>
            <person name="Colgrave M.L."/>
            <person name="Craik D.J."/>
        </authorList>
    </citation>
    <scope>PROTEIN SEQUENCE</scope>
    <scope>FUNCTION</scope>
    <scope>MASS SPECTROMETRY</scope>
    <scope>IDENTIFICATION BY MASS SPECTROMETRY</scope>
    <scope>PRESENCE OF DISULFIDE BONDS</scope>
</reference>
<protein>
    <recommendedName>
        <fullName evidence="3">Cyclotide mela-1</fullName>
    </recommendedName>
</protein>
<proteinExistence type="evidence at protein level"/>
<sequence length="29" mass="3186">GKYTCGETCFKGKCYTPGCTCSYPICKKD</sequence>
<accession>C0HK28</accession>
<comment type="function">
    <text evidence="1 2">Probably participates in a plant defense mechanism (Potential). Binds to and induces leakage in phospholipd membranes, particularly ones containing 1-palmitoyl-2-oleophosphatidylethanolamine (POPE) (PubMed:26322745). In vitro, displays cytotoxicity against cultured cells but no hemolytic activity towards fresh erythrocytes (PubMed:26322745). Not active against Gram-negative bacterium E.coli ATCC 25922 or Gram-positive bacterium S.aureus ATCC 25923 up to a concentration of 64 uM (PubMed:26322745).</text>
</comment>
<comment type="domain">
    <text evidence="4">The presence of a 'disulfide through disulfide knot' structurally defines this protein as a knottin.</text>
</comment>
<comment type="PTM">
    <text evidence="1">This is a cyclic peptide.</text>
</comment>
<comment type="PTM">
    <text evidence="2">Contains 3 disulfide bonds.</text>
</comment>
<comment type="mass spectrometry" mass="3159.3" method="Electrospray" evidence="2"/>
<comment type="similarity">
    <text evidence="3">Belongs to the cyclotide family. Moebuis subfamily.</text>
</comment>
<comment type="caution">
    <text evidence="1">This peptide is cyclic. The start position was chosen by similarity to Oak1 (kalata B1) for which the DNA sequence is known.</text>
</comment>
<keyword id="KW-0204">Cytolysis</keyword>
<keyword id="KW-0903">Direct protein sequencing</keyword>
<keyword id="KW-1015">Disulfide bond</keyword>
<keyword id="KW-0960">Knottin</keyword>
<keyword id="KW-0611">Plant defense</keyword>
<dbReference type="SMR" id="C0HK28"/>
<dbReference type="GO" id="GO:0006952">
    <property type="term" value="P:defense response"/>
    <property type="evidence" value="ECO:0007669"/>
    <property type="project" value="UniProtKB-KW"/>
</dbReference>
<dbReference type="GO" id="GO:0031640">
    <property type="term" value="P:killing of cells of another organism"/>
    <property type="evidence" value="ECO:0007669"/>
    <property type="project" value="UniProtKB-KW"/>
</dbReference>
<dbReference type="InterPro" id="IPR005535">
    <property type="entry name" value="Cyclotide"/>
</dbReference>
<dbReference type="InterPro" id="IPR036146">
    <property type="entry name" value="Cyclotide_sf"/>
</dbReference>
<dbReference type="Pfam" id="PF03784">
    <property type="entry name" value="Cyclotide"/>
    <property type="match status" value="1"/>
</dbReference>
<dbReference type="SUPFAM" id="SSF57038">
    <property type="entry name" value="Cyclotides"/>
    <property type="match status" value="1"/>
</dbReference>
<dbReference type="PROSITE" id="PS51052">
    <property type="entry name" value="CYCLOTIDE"/>
    <property type="match status" value="1"/>
</dbReference>